<accession>Q7MPH5</accession>
<protein>
    <recommendedName>
        <fullName evidence="1">Small ribosomal subunit protein uS14</fullName>
    </recommendedName>
    <alternativeName>
        <fullName evidence="2">30S ribosomal protein S14</fullName>
    </alternativeName>
</protein>
<gene>
    <name evidence="1" type="primary">rpsN</name>
    <name type="ordered locus">VV0388</name>
</gene>
<organism>
    <name type="scientific">Vibrio vulnificus (strain YJ016)</name>
    <dbReference type="NCBI Taxonomy" id="196600"/>
    <lineage>
        <taxon>Bacteria</taxon>
        <taxon>Pseudomonadati</taxon>
        <taxon>Pseudomonadota</taxon>
        <taxon>Gammaproteobacteria</taxon>
        <taxon>Vibrionales</taxon>
        <taxon>Vibrionaceae</taxon>
        <taxon>Vibrio</taxon>
    </lineage>
</organism>
<dbReference type="EMBL" id="BA000037">
    <property type="protein sequence ID" value="BAC93152.1"/>
    <property type="molecule type" value="Genomic_DNA"/>
</dbReference>
<dbReference type="RefSeq" id="WP_011078820.1">
    <property type="nucleotide sequence ID" value="NC_005139.1"/>
</dbReference>
<dbReference type="SMR" id="Q7MPH5"/>
<dbReference type="STRING" id="672.VV93_v1c03590"/>
<dbReference type="GeneID" id="93895053"/>
<dbReference type="KEGG" id="vvy:VV0388"/>
<dbReference type="eggNOG" id="COG0199">
    <property type="taxonomic scope" value="Bacteria"/>
</dbReference>
<dbReference type="HOGENOM" id="CLU_139869_0_1_6"/>
<dbReference type="Proteomes" id="UP000002675">
    <property type="component" value="Chromosome I"/>
</dbReference>
<dbReference type="GO" id="GO:0005737">
    <property type="term" value="C:cytoplasm"/>
    <property type="evidence" value="ECO:0007669"/>
    <property type="project" value="UniProtKB-ARBA"/>
</dbReference>
<dbReference type="GO" id="GO:0015935">
    <property type="term" value="C:small ribosomal subunit"/>
    <property type="evidence" value="ECO:0007669"/>
    <property type="project" value="TreeGrafter"/>
</dbReference>
<dbReference type="GO" id="GO:0019843">
    <property type="term" value="F:rRNA binding"/>
    <property type="evidence" value="ECO:0007669"/>
    <property type="project" value="UniProtKB-UniRule"/>
</dbReference>
<dbReference type="GO" id="GO:0003735">
    <property type="term" value="F:structural constituent of ribosome"/>
    <property type="evidence" value="ECO:0007669"/>
    <property type="project" value="InterPro"/>
</dbReference>
<dbReference type="GO" id="GO:0006412">
    <property type="term" value="P:translation"/>
    <property type="evidence" value="ECO:0007669"/>
    <property type="project" value="UniProtKB-UniRule"/>
</dbReference>
<dbReference type="FunFam" id="1.10.287.1480:FF:000001">
    <property type="entry name" value="30S ribosomal protein S14"/>
    <property type="match status" value="1"/>
</dbReference>
<dbReference type="Gene3D" id="1.10.287.1480">
    <property type="match status" value="1"/>
</dbReference>
<dbReference type="HAMAP" id="MF_00537">
    <property type="entry name" value="Ribosomal_uS14_1"/>
    <property type="match status" value="1"/>
</dbReference>
<dbReference type="InterPro" id="IPR001209">
    <property type="entry name" value="Ribosomal_uS14"/>
</dbReference>
<dbReference type="InterPro" id="IPR023036">
    <property type="entry name" value="Ribosomal_uS14_bac/plastid"/>
</dbReference>
<dbReference type="InterPro" id="IPR018271">
    <property type="entry name" value="Ribosomal_uS14_CS"/>
</dbReference>
<dbReference type="NCBIfam" id="NF006477">
    <property type="entry name" value="PRK08881.1"/>
    <property type="match status" value="1"/>
</dbReference>
<dbReference type="PANTHER" id="PTHR19836">
    <property type="entry name" value="30S RIBOSOMAL PROTEIN S14"/>
    <property type="match status" value="1"/>
</dbReference>
<dbReference type="PANTHER" id="PTHR19836:SF19">
    <property type="entry name" value="SMALL RIBOSOMAL SUBUNIT PROTEIN US14M"/>
    <property type="match status" value="1"/>
</dbReference>
<dbReference type="Pfam" id="PF00253">
    <property type="entry name" value="Ribosomal_S14"/>
    <property type="match status" value="1"/>
</dbReference>
<dbReference type="SUPFAM" id="SSF57716">
    <property type="entry name" value="Glucocorticoid receptor-like (DNA-binding domain)"/>
    <property type="match status" value="1"/>
</dbReference>
<dbReference type="PROSITE" id="PS00527">
    <property type="entry name" value="RIBOSOMAL_S14"/>
    <property type="match status" value="1"/>
</dbReference>
<comment type="function">
    <text evidence="1">Binds 16S rRNA, required for the assembly of 30S particles and may also be responsible for determining the conformation of the 16S rRNA at the A site.</text>
</comment>
<comment type="subunit">
    <text evidence="1">Part of the 30S ribosomal subunit. Contacts proteins S3 and S10.</text>
</comment>
<comment type="similarity">
    <text evidence="1">Belongs to the universal ribosomal protein uS14 family.</text>
</comment>
<reference key="1">
    <citation type="journal article" date="2003" name="Genome Res.">
        <title>Comparative genome analysis of Vibrio vulnificus, a marine pathogen.</title>
        <authorList>
            <person name="Chen C.-Y."/>
            <person name="Wu K.-M."/>
            <person name="Chang Y.-C."/>
            <person name="Chang C.-H."/>
            <person name="Tsai H.-C."/>
            <person name="Liao T.-L."/>
            <person name="Liu Y.-M."/>
            <person name="Chen H.-J."/>
            <person name="Shen A.B.-T."/>
            <person name="Li J.-C."/>
            <person name="Su T.-L."/>
            <person name="Shao C.-P."/>
            <person name="Lee C.-T."/>
            <person name="Hor L.-I."/>
            <person name="Tsai S.-F."/>
        </authorList>
    </citation>
    <scope>NUCLEOTIDE SEQUENCE [LARGE SCALE GENOMIC DNA]</scope>
    <source>
        <strain>YJ016</strain>
    </source>
</reference>
<evidence type="ECO:0000255" key="1">
    <source>
        <dbReference type="HAMAP-Rule" id="MF_00537"/>
    </source>
</evidence>
<evidence type="ECO:0000305" key="2"/>
<proteinExistence type="inferred from homology"/>
<keyword id="KW-0687">Ribonucleoprotein</keyword>
<keyword id="KW-0689">Ribosomal protein</keyword>
<keyword id="KW-0694">RNA-binding</keyword>
<keyword id="KW-0699">rRNA-binding</keyword>
<sequence length="101" mass="11511">MAKQSMKAREAKRAKLVAKFAEKRASLKAIISDVNVSEEDRWNAVLKLQTLPRDSSASRQRNRCNQTGRPHGYLRKFGLSRIKVREACMKGEIPGLRKASW</sequence>
<name>RS14_VIBVY</name>
<feature type="chain" id="PRO_1000128634" description="Small ribosomal subunit protein uS14">
    <location>
        <begin position="1"/>
        <end position="101"/>
    </location>
</feature>